<feature type="chain" id="PRO_0000164710" description="Holin">
    <location>
        <begin position="1"/>
        <end position="141"/>
    </location>
</feature>
<feature type="transmembrane region" description="Helical" evidence="1">
    <location>
        <begin position="9"/>
        <end position="29"/>
    </location>
</feature>
<feature type="transmembrane region" description="Helical" evidence="1">
    <location>
        <begin position="37"/>
        <end position="57"/>
    </location>
</feature>
<feature type="coiled-coil region" evidence="1">
    <location>
        <begin position="74"/>
        <end position="108"/>
    </location>
</feature>
<feature type="mutagenesis site" description="Decreased and delayed host membrane disruption." evidence="3">
    <original>PG</original>
    <variation>AA</variation>
    <location>
        <begin position="17"/>
        <end position="18"/>
    </location>
</feature>
<feature type="mutagenesis site" description="Complete loss of ability to induce host cell lysis." evidence="2">
    <original>G</original>
    <variation>D</variation>
    <location>
        <position position="28"/>
    </location>
</feature>
<evidence type="ECO:0000255" key="1">
    <source>
        <dbReference type="HAMAP-Rule" id="MF_04168"/>
    </source>
</evidence>
<evidence type="ECO:0000269" key="2">
    <source>
    </source>
</evidence>
<evidence type="ECO:0000269" key="3">
    <source>
    </source>
</evidence>
<evidence type="ECO:0000269" key="4">
    <source>
    </source>
</evidence>
<evidence type="ECO:0000269" key="5">
    <source>
    </source>
</evidence>
<evidence type="ECO:0000303" key="6">
    <source>
    </source>
</evidence>
<evidence type="ECO:0000305" key="7"/>
<organismHost>
    <name type="scientific">Mycobacterium</name>
    <dbReference type="NCBI Taxonomy" id="1763"/>
</organismHost>
<keyword id="KW-0175">Coiled coil</keyword>
<keyword id="KW-0204">Cytolysis</keyword>
<keyword id="KW-1030">Host cell inner membrane</keyword>
<keyword id="KW-0578">Host cell lysis by virus</keyword>
<keyword id="KW-1032">Host cell membrane</keyword>
<keyword id="KW-1043">Host membrane</keyword>
<keyword id="KW-0472">Membrane</keyword>
<keyword id="KW-1185">Reference proteome</keyword>
<keyword id="KW-0812">Transmembrane</keyword>
<keyword id="KW-1133">Transmembrane helix</keyword>
<keyword id="KW-1188">Viral release from host cell</keyword>
<gene>
    <name type="primary">11</name>
</gene>
<accession>O64204</accession>
<organism>
    <name type="scientific">Mycobacterium phage D29</name>
    <name type="common">Mycobacteriophage D29</name>
    <dbReference type="NCBI Taxonomy" id="28369"/>
    <lineage>
        <taxon>Viruses</taxon>
        <taxon>Duplodnaviria</taxon>
        <taxon>Heunggongvirae</taxon>
        <taxon>Uroviricota</taxon>
        <taxon>Caudoviricetes</taxon>
        <taxon>Fromanvirus</taxon>
    </lineage>
</organism>
<reference key="1">
    <citation type="journal article" date="1998" name="J. Mol. Biol.">
        <title>Genome structure of mycobacteriophage D29: implications for phage evolution.</title>
        <authorList>
            <person name="Ford M.E."/>
            <person name="Sarkis G.J."/>
            <person name="Belanger A.E."/>
            <person name="Hendrix R.W."/>
            <person name="Hatfull G.F."/>
        </authorList>
    </citation>
    <scope>NUCLEOTIDE SEQUENCE [LARGE SCALE GENOMIC DNA]</scope>
</reference>
<reference key="2">
    <citation type="journal article" date="2016" name="FEBS J.">
        <title>Mycobacteriophage D29 holin C-terminal region functionally assists in holin aggregation and bacterial cell death.</title>
        <authorList>
            <person name="Kamilla S."/>
            <person name="Jain V."/>
        </authorList>
    </citation>
    <scope>FUNCTION</scope>
    <scope>MUTAGENESIS OF GLY-28</scope>
    <scope>DOMAIN</scope>
</reference>
<reference key="3">
    <citation type="journal article" date="2016" name="ACS Chem. Biol.">
        <title>Molecular Mechanism of Holin Transmembrane Domain I in Pore Formation and Bacterial Cell Death.</title>
        <authorList>
            <person name="Lella M."/>
            <person name="Kamilla S."/>
            <person name="Jain V."/>
            <person name="Mahalakshmi R."/>
        </authorList>
    </citation>
    <scope>DOMAIN</scope>
    <scope>MUTAGENESIS OF 17-PRO-GLY-18</scope>
    <scope>SUBUNIT</scope>
</reference>
<reference key="4">
    <citation type="journal article" date="2020" name="Front. Microbiol.">
        <title>Deciphering the Role of Holin in Mycobacteriophage D29 Physiology.</title>
        <authorList>
            <person name="Bavda V.R."/>
            <person name="Jain V."/>
        </authorList>
    </citation>
    <scope>FUNCTION</scope>
</reference>
<reference key="5">
    <citation type="journal article" date="2021" name="J. Virol.">
        <title>Decoding the molecular properties of mycobacteriophage D29 Holin provides insights into Holin engineering.</title>
        <authorList>
            <person name="Bavda V.R."/>
            <person name="Yadav A."/>
            <person name="Jain V."/>
        </authorList>
    </citation>
    <scope>DOMAIN</scope>
</reference>
<name>HOLIN_BPMD2</name>
<protein>
    <recommendedName>
        <fullName evidence="1 6">Holin</fullName>
    </recommendedName>
    <alternativeName>
        <fullName evidence="7">Gene product 11</fullName>
        <shortName evidence="7">gp11</shortName>
    </alternativeName>
</protein>
<sequence>MSPKIRETLYYVGTLVPGILGIALIWGGIDAGAAANIGDIVAGALNLVGAAAPATAAVKVNQQRKDGTLTTSPVDQVTRGVEQVLAAKQNAEAEVERVKQALESAVNGAVPQLGPLASQILNGIQPAYSQPFDPHTQPWNR</sequence>
<proteinExistence type="evidence at protein level"/>
<comment type="function">
    <text evidence="1 2 4 7">Accumulates harmlessly in the cytoplasmic membrane until it reaches a critical concentration that triggers the formation of micron-scale pores (holes) causing host cell membrane disruption and endolysin escape into the periplasmic space (Probable). Determines the precise timing of host cell lysis (PubMed:32477303). Participates with the endolysin protein in the sequential events which lead to the programmed host cell lysis releasing the mature viral particles from the host cell (PubMed:26471254).</text>
</comment>
<comment type="subunit">
    <text evidence="1 3">Homomultimer (PubMed:26701742). Self-associates to form a pore (PubMed:26701742).</text>
</comment>
<comment type="subcellular location">
    <subcellularLocation>
        <location evidence="1">Host cell inner membrane</location>
        <topology evidence="1 7">Multi-pass membrane protein</topology>
    </subcellularLocation>
</comment>
<comment type="domain">
    <text evidence="1 2 3 5">The first transmembrane region undergoes a helix to beta-hairpin conformational change, which is responsible for its self-association and pore formation in the host membrane (PubMed:26701742). The coiled coil region is required for host cell lysis and for cytotoxic activity (PubMed:26471254, PubMed:33627396). The C-terminus determines the size of the hole (PubMed:26471254).</text>
</comment>
<comment type="similarity">
    <text evidence="1">Belongs to the Mycobacterium phage D29 holin family.</text>
</comment>
<dbReference type="EMBL" id="AF022214">
    <property type="protein sequence ID" value="AAC18451.1"/>
    <property type="molecule type" value="Genomic_DNA"/>
</dbReference>
<dbReference type="PIR" id="H72800">
    <property type="entry name" value="H72800"/>
</dbReference>
<dbReference type="RefSeq" id="NP_046826.1">
    <property type="nucleotide sequence ID" value="NC_001900.1"/>
</dbReference>
<dbReference type="SMR" id="O64204"/>
<dbReference type="TCDB" id="1.E.36.1.7">
    <property type="family name" value="the mycobacterial 2 tms phage holin (m2 hol) family"/>
</dbReference>
<dbReference type="GeneID" id="1261605"/>
<dbReference type="KEGG" id="vg:1261605"/>
<dbReference type="OrthoDB" id="17713at10239"/>
<dbReference type="Proteomes" id="UP000002131">
    <property type="component" value="Segment"/>
</dbReference>
<dbReference type="GO" id="GO:0020002">
    <property type="term" value="C:host cell plasma membrane"/>
    <property type="evidence" value="ECO:0007669"/>
    <property type="project" value="UniProtKB-SubCell"/>
</dbReference>
<dbReference type="GO" id="GO:0016020">
    <property type="term" value="C:membrane"/>
    <property type="evidence" value="ECO:0007669"/>
    <property type="project" value="UniProtKB-UniRule"/>
</dbReference>
<dbReference type="GO" id="GO:0140911">
    <property type="term" value="F:pore-forming activity"/>
    <property type="evidence" value="ECO:0007669"/>
    <property type="project" value="UniProtKB-UniRule"/>
</dbReference>
<dbReference type="GO" id="GO:0044660">
    <property type="term" value="P:viral release via pore formation in host cell membrane"/>
    <property type="evidence" value="ECO:0000315"/>
    <property type="project" value="UniProtKB"/>
</dbReference>
<dbReference type="HAMAP" id="MF_04168">
    <property type="entry name" value="HOLIN_D29"/>
    <property type="match status" value="1"/>
</dbReference>
<dbReference type="InterPro" id="IPR032121">
    <property type="entry name" value="Myco_phage_holin"/>
</dbReference>
<dbReference type="Pfam" id="PF16081">
    <property type="entry name" value="Phage_holin_7_1"/>
    <property type="match status" value="1"/>
</dbReference>